<name>GK_EHV1K</name>
<sequence length="343" mass="38045">MLLGGRTAYLSVLGLITAYAAFTIWYTLTAQLHNPCVYATVSIDSKDGIAAKWEVYNSTIVYAYPENGAKRFSDGLSGFDYVCRENWVNESKLDVLKNMKELHDKVRIVVGTRNCRAYLWSVQLQMITGAWLIYIAFLCLRQERRLLGPFRNQNEFLSPTGYTFNYATYTLATTVLKTHYTKFALLLCEASLRRVALSRTFKRDPIGFLCEHSAALALIGLEVGTHFVARLLVVGTVTLVHTPCSQIYPIYLKLASWGFVVAVTIVEIVAIIYEKPPKTGSSANPPTPATHGVKGLCTSCCSTVLANLCGKLVYLLLVIGAVSILLHYEQRIQIGLLGESFSS</sequence>
<feature type="signal peptide" evidence="2">
    <location>
        <begin position="1"/>
        <end position="31"/>
    </location>
</feature>
<feature type="chain" id="PRO_0000038305" description="Envelope glycoprotein K">
    <location>
        <begin position="32"/>
        <end position="343"/>
    </location>
</feature>
<feature type="topological domain" description="Extracellular" evidence="2">
    <location>
        <begin position="32"/>
        <end position="118"/>
    </location>
</feature>
<feature type="transmembrane region" description="Helical" evidence="2">
    <location>
        <begin position="119"/>
        <end position="139"/>
    </location>
</feature>
<feature type="topological domain" description="Cytoplasmic" evidence="2">
    <location>
        <begin position="140"/>
        <end position="213"/>
    </location>
</feature>
<feature type="transmembrane region" description="Helical" evidence="2">
    <location>
        <begin position="214"/>
        <end position="234"/>
    </location>
</feature>
<feature type="topological domain" description="Extracellular" evidence="2">
    <location>
        <begin position="235"/>
        <end position="251"/>
    </location>
</feature>
<feature type="transmembrane region" description="Helical" evidence="2">
    <location>
        <begin position="252"/>
        <end position="272"/>
    </location>
</feature>
<feature type="topological domain" description="Cytoplasmic" evidence="2">
    <location>
        <begin position="273"/>
        <end position="303"/>
    </location>
</feature>
<feature type="transmembrane region" description="Helical" evidence="2">
    <location>
        <begin position="304"/>
        <end position="324"/>
    </location>
</feature>
<feature type="topological domain" description="Extracellular" evidence="2">
    <location>
        <begin position="325"/>
        <end position="343"/>
    </location>
</feature>
<feature type="glycosylation site" description="N-linked (GlcNAc...) asparagine; by host" evidence="2">
    <location>
        <position position="57"/>
    </location>
</feature>
<feature type="glycosylation site" description="N-linked (GlcNAc...) asparagine; by host" evidence="2">
    <location>
        <position position="89"/>
    </location>
</feature>
<comment type="function">
    <text evidence="1">Glycoprotein that probably modulates membrane fusion events during secondary envelopment of cytoplasmic capsids that bud into specific trans-Golgi network (TGN)-derived membranes.</text>
</comment>
<comment type="subunit">
    <text>Interacts (via UL20 interaction region) with protein UL20 homolog (via N-terminus); this interaction probably plays a role in the coordinate transport of protein UL20 homolog and gK to the trans-Golgi network (TGN), and is required for the cell surface expression of gK.</text>
</comment>
<comment type="subcellular location">
    <subcellularLocation>
        <location>Host cell membrane</location>
        <topology>Multi-pass membrane protein</topology>
    </subcellularLocation>
    <subcellularLocation>
        <location evidence="1">Host endosome membrane</location>
        <topology evidence="1">Multi-pass membrane protein</topology>
    </subcellularLocation>
    <subcellularLocation>
        <location evidence="1">Host Golgi apparatus membrane</location>
        <topology evidence="1">Multi-pass membrane protein</topology>
    </subcellularLocation>
    <text evidence="1">During virion morphogenesis, this protein probably accumulates in the endosomes and trans-Golgi where secondary envelopment occurs. It is probably transported with UL20 to the cell surface from where it is endocytosed and directed to the trans-Golgi network (TGN). Cell surface expression of gK is required for virus-induced cell-to-cell fusion. Likely not present in extracellular virions (By similarity).</text>
</comment>
<comment type="PTM">
    <text evidence="1">N-glycosylated.</text>
</comment>
<comment type="similarity">
    <text evidence="3">Belongs to the alphaherpesvirinae glycoprotein K family.</text>
</comment>
<organism>
    <name type="scientific">Equine herpesvirus 1 (strain Kentucky A)</name>
    <name type="common">EHV-1</name>
    <name type="synonym">Equine abortion virus</name>
    <dbReference type="NCBI Taxonomy" id="10329"/>
    <lineage>
        <taxon>Viruses</taxon>
        <taxon>Duplodnaviria</taxon>
        <taxon>Heunggongvirae</taxon>
        <taxon>Peploviricota</taxon>
        <taxon>Herviviricetes</taxon>
        <taxon>Herpesvirales</taxon>
        <taxon>Orthoherpesviridae</taxon>
        <taxon>Alphaherpesvirinae</taxon>
        <taxon>Varicellovirus</taxon>
        <taxon>Varicellovirus equidalpha1</taxon>
        <taxon>Equid alphaherpesvirus 1</taxon>
    </lineage>
</organism>
<organismHost>
    <name type="scientific">Equus caballus</name>
    <name type="common">Horse</name>
    <dbReference type="NCBI Taxonomy" id="9796"/>
</organismHost>
<evidence type="ECO:0000250" key="1"/>
<evidence type="ECO:0000255" key="2"/>
<evidence type="ECO:0000305" key="3"/>
<accession>P68334</accession>
<accession>P28933</accession>
<protein>
    <recommendedName>
        <fullName>Envelope glycoprotein K</fullName>
    </recommendedName>
    <alternativeName>
        <fullName>Syncytial protein</fullName>
    </alternativeName>
</protein>
<dbReference type="EMBL" id="M95822">
    <property type="protein sequence ID" value="AAA46098.1"/>
    <property type="molecule type" value="Genomic_DNA"/>
</dbReference>
<dbReference type="PIR" id="G36795">
    <property type="entry name" value="MMBEA5"/>
</dbReference>
<dbReference type="RefSeq" id="YP_053051.1">
    <property type="nucleotide sequence ID" value="NC_001491.2"/>
</dbReference>
<dbReference type="SMR" id="P68334"/>
<dbReference type="GlyCosmos" id="P68334">
    <property type="glycosylation" value="2 sites, No reported glycans"/>
</dbReference>
<dbReference type="GeneID" id="1487514"/>
<dbReference type="KEGG" id="vg:1487514"/>
<dbReference type="GO" id="GO:0044175">
    <property type="term" value="C:host cell endosome membrane"/>
    <property type="evidence" value="ECO:0007669"/>
    <property type="project" value="UniProtKB-SubCell"/>
</dbReference>
<dbReference type="GO" id="GO:0044178">
    <property type="term" value="C:host cell Golgi membrane"/>
    <property type="evidence" value="ECO:0007669"/>
    <property type="project" value="UniProtKB-SubCell"/>
</dbReference>
<dbReference type="GO" id="GO:0020002">
    <property type="term" value="C:host cell plasma membrane"/>
    <property type="evidence" value="ECO:0007669"/>
    <property type="project" value="UniProtKB-SubCell"/>
</dbReference>
<dbReference type="GO" id="GO:0016020">
    <property type="term" value="C:membrane"/>
    <property type="evidence" value="ECO:0007669"/>
    <property type="project" value="UniProtKB-KW"/>
</dbReference>
<dbReference type="GO" id="GO:0039700">
    <property type="term" value="P:fusion of viral membrane with host outer nuclear membrane"/>
    <property type="evidence" value="ECO:0007669"/>
    <property type="project" value="UniProtKB-KW"/>
</dbReference>
<dbReference type="GO" id="GO:0060141">
    <property type="term" value="P:symbiont-mediated induction of syncytium formation"/>
    <property type="evidence" value="ECO:0007669"/>
    <property type="project" value="UniProtKB-KW"/>
</dbReference>
<dbReference type="InterPro" id="IPR002567">
    <property type="entry name" value="GK"/>
</dbReference>
<dbReference type="Pfam" id="PF01621">
    <property type="entry name" value="Fusion_gly_K"/>
    <property type="match status" value="1"/>
</dbReference>
<keyword id="KW-0325">Glycoprotein</keyword>
<keyword id="KW-1032">Host cell membrane</keyword>
<keyword id="KW-1039">Host endosome</keyword>
<keyword id="KW-1040">Host Golgi apparatus</keyword>
<keyword id="KW-1043">Host membrane</keyword>
<keyword id="KW-0472">Membrane</keyword>
<keyword id="KW-0732">Signal</keyword>
<keyword id="KW-1180">Syncytium formation induced by viral infection</keyword>
<keyword id="KW-0812">Transmembrane</keyword>
<keyword id="KW-1133">Transmembrane helix</keyword>
<keyword id="KW-1181">Viral primary envelope fusion with host outer nuclear membrane</keyword>
<keyword id="KW-1188">Viral release from host cell</keyword>
<proteinExistence type="inferred from homology"/>
<gene>
    <name type="primary">gK</name>
    <name type="ordered locus">ORF6</name>
    <name type="ORF">UL4</name>
</gene>
<reference key="1">
    <citation type="journal article" date="1992" name="J. Virol.">
        <title>Identification and transcriptional analyses of the UL3 and UL4 genes of equine herpesvirus 1, homologs of the ICP27 and glycoprotein K genes of herpes simplex virus.</title>
        <authorList>
            <person name="Zhao Y."/>
            <person name="Holden V.R."/>
            <person name="Harty R.N."/>
            <person name="O'Callaghan D.J."/>
        </authorList>
    </citation>
    <scope>NUCLEOTIDE SEQUENCE [GENOMIC DNA]</scope>
</reference>